<sequence>MLHTLPHCASGVDFPALLRLLKEGDALLLLQDGVTVAIEGNRFLESLRDAPITVYALKEDIDARGLGGQISDSVVRVDYTEFVRLTVKYANQMAW</sequence>
<accession>Q8Z1Y1</accession>
<accession>Q7C5R0</accession>
<reference key="1">
    <citation type="journal article" date="2001" name="Nature">
        <title>Complete genome sequence of a multiple drug resistant Salmonella enterica serovar Typhi CT18.</title>
        <authorList>
            <person name="Parkhill J."/>
            <person name="Dougan G."/>
            <person name="James K.D."/>
            <person name="Thomson N.R."/>
            <person name="Pickard D."/>
            <person name="Wain J."/>
            <person name="Churcher C.M."/>
            <person name="Mungall K.L."/>
            <person name="Bentley S.D."/>
            <person name="Holden M.T.G."/>
            <person name="Sebaihia M."/>
            <person name="Baker S."/>
            <person name="Basham D."/>
            <person name="Brooks K."/>
            <person name="Chillingworth T."/>
            <person name="Connerton P."/>
            <person name="Cronin A."/>
            <person name="Davis P."/>
            <person name="Davies R.M."/>
            <person name="Dowd L."/>
            <person name="White N."/>
            <person name="Farrar J."/>
            <person name="Feltwell T."/>
            <person name="Hamlin N."/>
            <person name="Haque A."/>
            <person name="Hien T.T."/>
            <person name="Holroyd S."/>
            <person name="Jagels K."/>
            <person name="Krogh A."/>
            <person name="Larsen T.S."/>
            <person name="Leather S."/>
            <person name="Moule S."/>
            <person name="O'Gaora P."/>
            <person name="Parry C."/>
            <person name="Quail M.A."/>
            <person name="Rutherford K.M."/>
            <person name="Simmonds M."/>
            <person name="Skelton J."/>
            <person name="Stevens K."/>
            <person name="Whitehead S."/>
            <person name="Barrell B.G."/>
        </authorList>
    </citation>
    <scope>NUCLEOTIDE SEQUENCE [LARGE SCALE GENOMIC DNA]</scope>
    <source>
        <strain>CT18</strain>
    </source>
</reference>
<reference key="2">
    <citation type="journal article" date="2003" name="J. Bacteriol.">
        <title>Comparative genomics of Salmonella enterica serovar Typhi strains Ty2 and CT18.</title>
        <authorList>
            <person name="Deng W."/>
            <person name="Liou S.-R."/>
            <person name="Plunkett G. III"/>
            <person name="Mayhew G.F."/>
            <person name="Rose D.J."/>
            <person name="Burland V."/>
            <person name="Kodoyianni V."/>
            <person name="Schwartz D.C."/>
            <person name="Blattner F.R."/>
        </authorList>
    </citation>
    <scope>NUCLEOTIDE SEQUENCE [LARGE SCALE GENOMIC DNA]</scope>
    <source>
        <strain>ATCC 700931 / Ty2</strain>
    </source>
</reference>
<evidence type="ECO:0000255" key="1">
    <source>
        <dbReference type="HAMAP-Rule" id="MF_01564"/>
    </source>
</evidence>
<keyword id="KW-0963">Cytoplasm</keyword>
<keyword id="KW-0819">tRNA processing</keyword>
<dbReference type="EMBL" id="AL513382">
    <property type="protein sequence ID" value="CAD08164.1"/>
    <property type="molecule type" value="Genomic_DNA"/>
</dbReference>
<dbReference type="EMBL" id="AE014613">
    <property type="protein sequence ID" value="AAO71523.1"/>
    <property type="molecule type" value="Genomic_DNA"/>
</dbReference>
<dbReference type="RefSeq" id="NP_458451.1">
    <property type="nucleotide sequence ID" value="NC_003198.1"/>
</dbReference>
<dbReference type="RefSeq" id="WP_000903398.1">
    <property type="nucleotide sequence ID" value="NZ_WSUR01000001.1"/>
</dbReference>
<dbReference type="SMR" id="Q8Z1Y1"/>
<dbReference type="STRING" id="220341.gene:17588177"/>
<dbReference type="KEGG" id="stt:t4056"/>
<dbReference type="KEGG" id="sty:STY4349"/>
<dbReference type="PATRIC" id="fig|220341.7.peg.4444"/>
<dbReference type="eggNOG" id="COG2168">
    <property type="taxonomic scope" value="Bacteria"/>
</dbReference>
<dbReference type="HOGENOM" id="CLU_166087_2_1_6"/>
<dbReference type="OMA" id="MLHTINK"/>
<dbReference type="OrthoDB" id="9795117at2"/>
<dbReference type="Proteomes" id="UP000000541">
    <property type="component" value="Chromosome"/>
</dbReference>
<dbReference type="Proteomes" id="UP000002670">
    <property type="component" value="Chromosome"/>
</dbReference>
<dbReference type="GO" id="GO:1990228">
    <property type="term" value="C:sulfurtransferase complex"/>
    <property type="evidence" value="ECO:0007669"/>
    <property type="project" value="TreeGrafter"/>
</dbReference>
<dbReference type="GO" id="GO:0002143">
    <property type="term" value="P:tRNA wobble position uridine thiolation"/>
    <property type="evidence" value="ECO:0007669"/>
    <property type="project" value="InterPro"/>
</dbReference>
<dbReference type="FunFam" id="3.40.1260.10:FF:000002">
    <property type="entry name" value="Sulfurtransferase TusB"/>
    <property type="match status" value="1"/>
</dbReference>
<dbReference type="Gene3D" id="3.40.1260.10">
    <property type="entry name" value="DsrEFH-like"/>
    <property type="match status" value="1"/>
</dbReference>
<dbReference type="HAMAP" id="MF_01564">
    <property type="entry name" value="Thiourid_synth_B"/>
    <property type="match status" value="1"/>
</dbReference>
<dbReference type="InterPro" id="IPR027396">
    <property type="entry name" value="DsrEFH-like"/>
</dbReference>
<dbReference type="InterPro" id="IPR023526">
    <property type="entry name" value="Sulphur_relay_TusB"/>
</dbReference>
<dbReference type="InterPro" id="IPR007215">
    <property type="entry name" value="Sulphur_relay_TusB/DsrH"/>
</dbReference>
<dbReference type="NCBIfam" id="NF010035">
    <property type="entry name" value="PRK13510.1"/>
    <property type="match status" value="1"/>
</dbReference>
<dbReference type="NCBIfam" id="TIGR03011">
    <property type="entry name" value="sulf_tusB_dsrH"/>
    <property type="match status" value="1"/>
</dbReference>
<dbReference type="PANTHER" id="PTHR37526">
    <property type="entry name" value="PROTEIN TUSB"/>
    <property type="match status" value="1"/>
</dbReference>
<dbReference type="PANTHER" id="PTHR37526:SF1">
    <property type="entry name" value="PROTEIN TUSB"/>
    <property type="match status" value="1"/>
</dbReference>
<dbReference type="Pfam" id="PF04077">
    <property type="entry name" value="DsrH"/>
    <property type="match status" value="1"/>
</dbReference>
<dbReference type="SUPFAM" id="SSF75169">
    <property type="entry name" value="DsrEFH-like"/>
    <property type="match status" value="1"/>
</dbReference>
<gene>
    <name evidence="1" type="primary">tusB</name>
    <name type="ordered locus">STY4349</name>
    <name type="ordered locus">t4056</name>
</gene>
<organism>
    <name type="scientific">Salmonella typhi</name>
    <dbReference type="NCBI Taxonomy" id="90370"/>
    <lineage>
        <taxon>Bacteria</taxon>
        <taxon>Pseudomonadati</taxon>
        <taxon>Pseudomonadota</taxon>
        <taxon>Gammaproteobacteria</taxon>
        <taxon>Enterobacterales</taxon>
        <taxon>Enterobacteriaceae</taxon>
        <taxon>Salmonella</taxon>
    </lineage>
</organism>
<protein>
    <recommendedName>
        <fullName evidence="1">Protein TusB</fullName>
    </recommendedName>
    <alternativeName>
        <fullName evidence="1">tRNA 2-thiouridine synthesizing protein B</fullName>
    </alternativeName>
</protein>
<comment type="function">
    <text evidence="1">Part of a sulfur-relay system required for 2-thiolation of 5-methylaminomethyl-2-thiouridine (mnm(5)s(2)U) at tRNA wobble positions.</text>
</comment>
<comment type="subunit">
    <text evidence="1">Heterohexamer, formed by a dimer of trimers. The hexameric TusBCD complex contains 2 copies each of TusB, TusC and TusD. The TusBCD complex interacts with TusE.</text>
</comment>
<comment type="subcellular location">
    <subcellularLocation>
        <location evidence="1">Cytoplasm</location>
    </subcellularLocation>
</comment>
<comment type="similarity">
    <text evidence="1">Belongs to the DsrH/TusB family.</text>
</comment>
<name>TUSB_SALTI</name>
<feature type="chain" id="PRO_0000234518" description="Protein TusB">
    <location>
        <begin position="1"/>
        <end position="95"/>
    </location>
</feature>
<proteinExistence type="inferred from homology"/>